<feature type="chain" id="PRO_0000215473" description="Poly(3-hydroxyalkanoate) polymerase subunit PhaC">
    <location>
        <begin position="1"/>
        <end position="355"/>
    </location>
</feature>
<feature type="domain" description="AB hydrolase-1" evidence="3">
    <location>
        <begin position="68"/>
        <end position="333"/>
    </location>
</feature>
<feature type="active site" evidence="3">
    <location>
        <position position="148"/>
    </location>
</feature>
<protein>
    <recommendedName>
        <fullName evidence="5">Poly(3-hydroxyalkanoate) polymerase subunit PhaC</fullName>
        <shortName>PHA polymerase</shortName>
        <ecNumber>2.3.1.-</ecNumber>
    </recommendedName>
    <alternativeName>
        <fullName>PHB synthase subunit PhaC</fullName>
    </alternativeName>
    <alternativeName>
        <fullName evidence="5">Poly(3-hydroxyalkanoate) synthase subunit PhaC</fullName>
        <shortName evidence="5">PHA synthase</shortName>
        <shortName>Polyhydroxyalkanoic acid synthase</shortName>
    </alternativeName>
    <alternativeName>
        <fullName>Poly(3-hydroxybutyrate) polymerase subunit PhaC</fullName>
        <shortName>PHB polymerase</shortName>
        <shortName>Poly-beta-hydroxybutyrate polymerase</shortName>
    </alternativeName>
</protein>
<name>PHAC_THIVI</name>
<organism>
    <name type="scientific">Thiocystis violacea</name>
    <dbReference type="NCBI Taxonomy" id="13725"/>
    <lineage>
        <taxon>Bacteria</taxon>
        <taxon>Pseudomonadati</taxon>
        <taxon>Pseudomonadota</taxon>
        <taxon>Gammaproteobacteria</taxon>
        <taxon>Chromatiales</taxon>
        <taxon>Chromatiaceae</taxon>
        <taxon>Thiocystis</taxon>
    </lineage>
</organism>
<sequence>MRPIDIRPDKLAQEMLDYTSKLGQGMENLLNADAIDTGVSPKEAVYSEDKLVLYRYDTPAGVTPQKTPLLIVYALVNRPYMTDIQEDRSTIKGLLATGQDVYLIDWGYPDQADSALTLDDYINGYIDSCVDYLCETHEVDQVNILGICQGGAFSLMYASLHPDKVKNLVTMVTPVDFKTPGNLLSAWVQNVDIDLAVDTMGNIPGELLNWTFLSLKPFSLTGQKYVNMVDMLDDPDKVKNFLRMEKWIFDSPDQAGETFRQFTKDFYQKNGFINGGVKLGGKEIDLKNVDCPVLNIYALQDHLVPPDASKALNPWSAARTYTELAFPGGHIGIYVSGKAQKEVTPAIGKWLNERS</sequence>
<gene>
    <name evidence="4" type="primary">phaC</name>
    <name evidence="5" type="synonym">phbC</name>
</gene>
<proteinExistence type="inferred from homology"/>
<evidence type="ECO:0000250" key="1"/>
<evidence type="ECO:0000250" key="2">
    <source>
        <dbReference type="UniProtKB" id="P45370"/>
    </source>
</evidence>
<evidence type="ECO:0000255" key="3"/>
<evidence type="ECO:0000303" key="4">
    <source>
    </source>
</evidence>
<evidence type="ECO:0000303" key="5">
    <source>
    </source>
</evidence>
<evidence type="ECO:0000305" key="6"/>
<accession>P45366</accession>
<reference key="1">
    <citation type="journal article" date="1993" name="Appl. Microbiol. Biotechnol.">
        <title>Cloning and molecular analysis of the poly(3-hydroxybutyric acid) biosynthetic genes of Thiocystis violacea.</title>
        <authorList>
            <person name="Liebergesell M."/>
            <person name="Steinbuechel A."/>
        </authorList>
    </citation>
    <scope>NUCLEOTIDE SEQUENCE [GENOMIC DNA]</scope>
    <source>
        <strain>2311 / DSM 208</strain>
    </source>
</reference>
<reference key="2">
    <citation type="journal article" date="1992" name="FEMS Microbiol. Rev.">
        <title>Molecular basis for biosynthesis and accumulation of polyhydroxyalkanoic acids in bacteria.</title>
        <authorList>
            <person name="Steinbuechel A."/>
            <person name="Hustede E."/>
            <person name="Liebergesell M."/>
            <person name="Pieper U."/>
            <person name="Timm A."/>
            <person name="Valentin H."/>
        </authorList>
    </citation>
    <scope>GENE NAME</scope>
</reference>
<dbReference type="EC" id="2.3.1.-"/>
<dbReference type="EMBL" id="L01113">
    <property type="protein sequence ID" value="AAB02862.1"/>
    <property type="molecule type" value="Genomic_DNA"/>
</dbReference>
<dbReference type="EMBL" id="S54369">
    <property type="protein sequence ID" value="AAC60430.1"/>
    <property type="molecule type" value="Genomic_DNA"/>
</dbReference>
<dbReference type="PIR" id="D48376">
    <property type="entry name" value="D48376"/>
</dbReference>
<dbReference type="SMR" id="P45366"/>
<dbReference type="ESTHER" id="thivi-phbc">
    <property type="family name" value="PHA_synth_III_C"/>
</dbReference>
<dbReference type="UniPathway" id="UPA00917"/>
<dbReference type="GO" id="GO:0005737">
    <property type="term" value="C:cytoplasm"/>
    <property type="evidence" value="ECO:0007669"/>
    <property type="project" value="UniProtKB-SubCell"/>
</dbReference>
<dbReference type="GO" id="GO:0016746">
    <property type="term" value="F:acyltransferase activity"/>
    <property type="evidence" value="ECO:0007669"/>
    <property type="project" value="UniProtKB-KW"/>
</dbReference>
<dbReference type="GO" id="GO:0042619">
    <property type="term" value="P:poly-hydroxybutyrate biosynthetic process"/>
    <property type="evidence" value="ECO:0007669"/>
    <property type="project" value="UniProtKB-KW"/>
</dbReference>
<dbReference type="Gene3D" id="3.40.50.1820">
    <property type="entry name" value="alpha/beta hydrolase"/>
    <property type="match status" value="1"/>
</dbReference>
<dbReference type="InterPro" id="IPR000073">
    <property type="entry name" value="AB_hydrolase_1"/>
</dbReference>
<dbReference type="InterPro" id="IPR029058">
    <property type="entry name" value="AB_hydrolase_fold"/>
</dbReference>
<dbReference type="InterPro" id="IPR051321">
    <property type="entry name" value="PHA/PHB_synthase"/>
</dbReference>
<dbReference type="InterPro" id="IPR010125">
    <property type="entry name" value="PHA_synth_III_C"/>
</dbReference>
<dbReference type="NCBIfam" id="TIGR01836">
    <property type="entry name" value="PHA_synth_III_C"/>
    <property type="match status" value="1"/>
</dbReference>
<dbReference type="PANTHER" id="PTHR36837">
    <property type="entry name" value="POLY(3-HYDROXYALKANOATE) POLYMERASE SUBUNIT PHAC"/>
    <property type="match status" value="1"/>
</dbReference>
<dbReference type="PANTHER" id="PTHR36837:SF2">
    <property type="entry name" value="POLY(3-HYDROXYALKANOATE) POLYMERASE SUBUNIT PHAC"/>
    <property type="match status" value="1"/>
</dbReference>
<dbReference type="Pfam" id="PF00561">
    <property type="entry name" value="Abhydrolase_1"/>
    <property type="match status" value="1"/>
</dbReference>
<dbReference type="SUPFAM" id="SSF53474">
    <property type="entry name" value="alpha/beta-Hydrolases"/>
    <property type="match status" value="1"/>
</dbReference>
<keyword id="KW-0012">Acyltransferase</keyword>
<keyword id="KW-0963">Cytoplasm</keyword>
<keyword id="KW-0583">PHB biosynthesis</keyword>
<keyword id="KW-0808">Transferase</keyword>
<comment type="function">
    <text>Polymerizes D(-)-3-hydroxybutyryl-CoA to create PHB which consists of thousands of hydroxybutyrate molecules linked end to end. PHB serves as an intracellular energy reserve material when cells grow under conditions of nutrient limitation.</text>
</comment>
<comment type="catalytic activity">
    <reaction evidence="2">
        <text>(3R)-3-hydroxybutanoyl-CoA + [(3R)-hydroxybutanoate](n) = [(3R)-hydroxybutanoate](n+1) + CoA</text>
        <dbReference type="Rhea" id="RHEA:15405"/>
        <dbReference type="Rhea" id="RHEA-COMP:14464"/>
        <dbReference type="Rhea" id="RHEA-COMP:14465"/>
        <dbReference type="ChEBI" id="CHEBI:8298"/>
        <dbReference type="ChEBI" id="CHEBI:57287"/>
        <dbReference type="ChEBI" id="CHEBI:57315"/>
    </reaction>
</comment>
<comment type="pathway">
    <text>Biopolymer metabolism; poly-(R)-3-hydroxybutanoate biosynthesis.</text>
</comment>
<comment type="subunit">
    <text evidence="2">Forms a heterodimer with PhaE, which may multimerize in the presence of 3-hydroxybutyryl-CoA.</text>
</comment>
<comment type="subcellular location">
    <subcellularLocation>
        <location evidence="1">Cytoplasm</location>
    </subcellularLocation>
</comment>
<comment type="miscellaneous">
    <text evidence="6">Poly(3-hydroxyalkanoic acids) (PHA), of which PHB is among the most common compounds, are prokaryotic intracellular storage compounds with potential uses as a renewable, biodegradable thermoplastic.</text>
</comment>
<comment type="similarity">
    <text evidence="6">Belongs to the PHA/PHB synthase family. Type III PhaC subfamily.</text>
</comment>